<proteinExistence type="uncertain"/>
<keyword id="KW-0597">Phosphoprotein</keyword>
<keyword id="KW-1185">Reference proteome</keyword>
<keyword id="KW-0804">Transcription</keyword>
<keyword id="KW-0805">Transcription regulation</keyword>
<name>SSX8_HUMAN</name>
<protein>
    <recommendedName>
        <fullName>Putative protein SSX8</fullName>
    </recommendedName>
</protein>
<evidence type="ECO:0000250" key="1">
    <source>
        <dbReference type="UniProtKB" id="Q16384"/>
    </source>
</evidence>
<evidence type="ECO:0000255" key="2">
    <source>
        <dbReference type="PROSITE-ProRule" id="PRU00120"/>
    </source>
</evidence>
<evidence type="ECO:0000256" key="3">
    <source>
        <dbReference type="SAM" id="MobiDB-lite"/>
    </source>
</evidence>
<evidence type="ECO:0000269" key="4">
    <source>
    </source>
</evidence>
<evidence type="ECO:0000305" key="5"/>
<evidence type="ECO:0000312" key="6">
    <source>
        <dbReference type="HGNC" id="HGNC:19654"/>
    </source>
</evidence>
<feature type="chain" id="PRO_0000227812" description="Putative protein SSX8">
    <location>
        <begin position="1"/>
        <end position="187"/>
    </location>
</feature>
<feature type="domain" description="KRAB-related" evidence="2">
    <location>
        <begin position="20"/>
        <end position="83"/>
    </location>
</feature>
<feature type="region of interest" description="Disordered" evidence="3">
    <location>
        <begin position="1"/>
        <end position="21"/>
    </location>
</feature>
<feature type="region of interest" description="Disordered" evidence="3">
    <location>
        <begin position="109"/>
        <end position="187"/>
    </location>
</feature>
<feature type="compositionally biased region" description="Basic residues" evidence="3">
    <location>
        <begin position="152"/>
        <end position="168"/>
    </location>
</feature>
<feature type="modified residue" description="Phosphoserine" evidence="1">
    <location>
        <position position="123"/>
    </location>
</feature>
<gene>
    <name evidence="6" type="primary">SSX8P</name>
    <name type="synonym">SSX8</name>
</gene>
<organism>
    <name type="scientific">Homo sapiens</name>
    <name type="common">Human</name>
    <dbReference type="NCBI Taxonomy" id="9606"/>
    <lineage>
        <taxon>Eukaryota</taxon>
        <taxon>Metazoa</taxon>
        <taxon>Chordata</taxon>
        <taxon>Craniata</taxon>
        <taxon>Vertebrata</taxon>
        <taxon>Euteleostomi</taxon>
        <taxon>Mammalia</taxon>
        <taxon>Eutheria</taxon>
        <taxon>Euarchontoglires</taxon>
        <taxon>Primates</taxon>
        <taxon>Haplorrhini</taxon>
        <taxon>Catarrhini</taxon>
        <taxon>Hominidae</taxon>
        <taxon>Homo</taxon>
    </lineage>
</organism>
<reference key="1">
    <citation type="journal article" date="2005" name="Nature">
        <title>The DNA sequence of the human X chromosome.</title>
        <authorList>
            <person name="Ross M.T."/>
            <person name="Grafham D.V."/>
            <person name="Coffey A.J."/>
            <person name="Scherer S."/>
            <person name="McLay K."/>
            <person name="Muzny D."/>
            <person name="Platzer M."/>
            <person name="Howell G.R."/>
            <person name="Burrows C."/>
            <person name="Bird C.P."/>
            <person name="Frankish A."/>
            <person name="Lovell F.L."/>
            <person name="Howe K.L."/>
            <person name="Ashurst J.L."/>
            <person name="Fulton R.S."/>
            <person name="Sudbrak R."/>
            <person name="Wen G."/>
            <person name="Jones M.C."/>
            <person name="Hurles M.E."/>
            <person name="Andrews T.D."/>
            <person name="Scott C.E."/>
            <person name="Searle S."/>
            <person name="Ramser J."/>
            <person name="Whittaker A."/>
            <person name="Deadman R."/>
            <person name="Carter N.P."/>
            <person name="Hunt S.E."/>
            <person name="Chen R."/>
            <person name="Cree A."/>
            <person name="Gunaratne P."/>
            <person name="Havlak P."/>
            <person name="Hodgson A."/>
            <person name="Metzker M.L."/>
            <person name="Richards S."/>
            <person name="Scott G."/>
            <person name="Steffen D."/>
            <person name="Sodergren E."/>
            <person name="Wheeler D.A."/>
            <person name="Worley K.C."/>
            <person name="Ainscough R."/>
            <person name="Ambrose K.D."/>
            <person name="Ansari-Lari M.A."/>
            <person name="Aradhya S."/>
            <person name="Ashwell R.I."/>
            <person name="Babbage A.K."/>
            <person name="Bagguley C.L."/>
            <person name="Ballabio A."/>
            <person name="Banerjee R."/>
            <person name="Barker G.E."/>
            <person name="Barlow K.F."/>
            <person name="Barrett I.P."/>
            <person name="Bates K.N."/>
            <person name="Beare D.M."/>
            <person name="Beasley H."/>
            <person name="Beasley O."/>
            <person name="Beck A."/>
            <person name="Bethel G."/>
            <person name="Blechschmidt K."/>
            <person name="Brady N."/>
            <person name="Bray-Allen S."/>
            <person name="Bridgeman A.M."/>
            <person name="Brown A.J."/>
            <person name="Brown M.J."/>
            <person name="Bonnin D."/>
            <person name="Bruford E.A."/>
            <person name="Buhay C."/>
            <person name="Burch P."/>
            <person name="Burford D."/>
            <person name="Burgess J."/>
            <person name="Burrill W."/>
            <person name="Burton J."/>
            <person name="Bye J.M."/>
            <person name="Carder C."/>
            <person name="Carrel L."/>
            <person name="Chako J."/>
            <person name="Chapman J.C."/>
            <person name="Chavez D."/>
            <person name="Chen E."/>
            <person name="Chen G."/>
            <person name="Chen Y."/>
            <person name="Chen Z."/>
            <person name="Chinault C."/>
            <person name="Ciccodicola A."/>
            <person name="Clark S.Y."/>
            <person name="Clarke G."/>
            <person name="Clee C.M."/>
            <person name="Clegg S."/>
            <person name="Clerc-Blankenburg K."/>
            <person name="Clifford K."/>
            <person name="Cobley V."/>
            <person name="Cole C.G."/>
            <person name="Conquer J.S."/>
            <person name="Corby N."/>
            <person name="Connor R.E."/>
            <person name="David R."/>
            <person name="Davies J."/>
            <person name="Davis C."/>
            <person name="Davis J."/>
            <person name="Delgado O."/>
            <person name="Deshazo D."/>
            <person name="Dhami P."/>
            <person name="Ding Y."/>
            <person name="Dinh H."/>
            <person name="Dodsworth S."/>
            <person name="Draper H."/>
            <person name="Dugan-Rocha S."/>
            <person name="Dunham A."/>
            <person name="Dunn M."/>
            <person name="Durbin K.J."/>
            <person name="Dutta I."/>
            <person name="Eades T."/>
            <person name="Ellwood M."/>
            <person name="Emery-Cohen A."/>
            <person name="Errington H."/>
            <person name="Evans K.L."/>
            <person name="Faulkner L."/>
            <person name="Francis F."/>
            <person name="Frankland J."/>
            <person name="Fraser A.E."/>
            <person name="Galgoczy P."/>
            <person name="Gilbert J."/>
            <person name="Gill R."/>
            <person name="Gloeckner G."/>
            <person name="Gregory S.G."/>
            <person name="Gribble S."/>
            <person name="Griffiths C."/>
            <person name="Grocock R."/>
            <person name="Gu Y."/>
            <person name="Gwilliam R."/>
            <person name="Hamilton C."/>
            <person name="Hart E.A."/>
            <person name="Hawes A."/>
            <person name="Heath P.D."/>
            <person name="Heitmann K."/>
            <person name="Hennig S."/>
            <person name="Hernandez J."/>
            <person name="Hinzmann B."/>
            <person name="Ho S."/>
            <person name="Hoffs M."/>
            <person name="Howden P.J."/>
            <person name="Huckle E.J."/>
            <person name="Hume J."/>
            <person name="Hunt P.J."/>
            <person name="Hunt A.R."/>
            <person name="Isherwood J."/>
            <person name="Jacob L."/>
            <person name="Johnson D."/>
            <person name="Jones S."/>
            <person name="de Jong P.J."/>
            <person name="Joseph S.S."/>
            <person name="Keenan S."/>
            <person name="Kelly S."/>
            <person name="Kershaw J.K."/>
            <person name="Khan Z."/>
            <person name="Kioschis P."/>
            <person name="Klages S."/>
            <person name="Knights A.J."/>
            <person name="Kosiura A."/>
            <person name="Kovar-Smith C."/>
            <person name="Laird G.K."/>
            <person name="Langford C."/>
            <person name="Lawlor S."/>
            <person name="Leversha M."/>
            <person name="Lewis L."/>
            <person name="Liu W."/>
            <person name="Lloyd C."/>
            <person name="Lloyd D.M."/>
            <person name="Loulseged H."/>
            <person name="Loveland J.E."/>
            <person name="Lovell J.D."/>
            <person name="Lozado R."/>
            <person name="Lu J."/>
            <person name="Lyne R."/>
            <person name="Ma J."/>
            <person name="Maheshwari M."/>
            <person name="Matthews L.H."/>
            <person name="McDowall J."/>
            <person name="McLaren S."/>
            <person name="McMurray A."/>
            <person name="Meidl P."/>
            <person name="Meitinger T."/>
            <person name="Milne S."/>
            <person name="Miner G."/>
            <person name="Mistry S.L."/>
            <person name="Morgan M."/>
            <person name="Morris S."/>
            <person name="Mueller I."/>
            <person name="Mullikin J.C."/>
            <person name="Nguyen N."/>
            <person name="Nordsiek G."/>
            <person name="Nyakatura G."/>
            <person name="O'dell C.N."/>
            <person name="Okwuonu G."/>
            <person name="Palmer S."/>
            <person name="Pandian R."/>
            <person name="Parker D."/>
            <person name="Parrish J."/>
            <person name="Pasternak S."/>
            <person name="Patel D."/>
            <person name="Pearce A.V."/>
            <person name="Pearson D.M."/>
            <person name="Pelan S.E."/>
            <person name="Perez L."/>
            <person name="Porter K.M."/>
            <person name="Ramsey Y."/>
            <person name="Reichwald K."/>
            <person name="Rhodes S."/>
            <person name="Ridler K.A."/>
            <person name="Schlessinger D."/>
            <person name="Schueler M.G."/>
            <person name="Sehra H.K."/>
            <person name="Shaw-Smith C."/>
            <person name="Shen H."/>
            <person name="Sheridan E.M."/>
            <person name="Shownkeen R."/>
            <person name="Skuce C.D."/>
            <person name="Smith M.L."/>
            <person name="Sotheran E.C."/>
            <person name="Steingruber H.E."/>
            <person name="Steward C.A."/>
            <person name="Storey R."/>
            <person name="Swann R.M."/>
            <person name="Swarbreck D."/>
            <person name="Tabor P.E."/>
            <person name="Taudien S."/>
            <person name="Taylor T."/>
            <person name="Teague B."/>
            <person name="Thomas K."/>
            <person name="Thorpe A."/>
            <person name="Timms K."/>
            <person name="Tracey A."/>
            <person name="Trevanion S."/>
            <person name="Tromans A.C."/>
            <person name="d'Urso M."/>
            <person name="Verduzco D."/>
            <person name="Villasana D."/>
            <person name="Waldron L."/>
            <person name="Wall M."/>
            <person name="Wang Q."/>
            <person name="Warren J."/>
            <person name="Warry G.L."/>
            <person name="Wei X."/>
            <person name="West A."/>
            <person name="Whitehead S.L."/>
            <person name="Whiteley M.N."/>
            <person name="Wilkinson J.E."/>
            <person name="Willey D.L."/>
            <person name="Williams G."/>
            <person name="Williams L."/>
            <person name="Williamson A."/>
            <person name="Williamson H."/>
            <person name="Wilming L."/>
            <person name="Woodmansey R.L."/>
            <person name="Wray P.W."/>
            <person name="Yen J."/>
            <person name="Zhang J."/>
            <person name="Zhou J."/>
            <person name="Zoghbi H."/>
            <person name="Zorilla S."/>
            <person name="Buck D."/>
            <person name="Reinhardt R."/>
            <person name="Poustka A."/>
            <person name="Rosenthal A."/>
            <person name="Lehrach H."/>
            <person name="Meindl A."/>
            <person name="Minx P.J."/>
            <person name="Hillier L.W."/>
            <person name="Willard H.F."/>
            <person name="Wilson R.K."/>
            <person name="Waterston R.H."/>
            <person name="Rice C.M."/>
            <person name="Vaudin M."/>
            <person name="Coulson A."/>
            <person name="Nelson D.L."/>
            <person name="Weinstock G."/>
            <person name="Sulston J.E."/>
            <person name="Durbin R.M."/>
            <person name="Hubbard T."/>
            <person name="Gibbs R.A."/>
            <person name="Beck S."/>
            <person name="Rogers J."/>
            <person name="Bentley D.R."/>
        </authorList>
    </citation>
    <scope>NUCLEOTIDE SEQUENCE [LARGE SCALE GENOMIC DNA]</scope>
</reference>
<reference key="2">
    <citation type="journal article" date="2002" name="Int. J. Cancer">
        <title>The SSX gene family: characterization of 9 complete genes.</title>
        <authorList>
            <person name="Gure A.O."/>
            <person name="Wei I.J."/>
            <person name="Old L.J."/>
            <person name="Chen Y.-T."/>
        </authorList>
    </citation>
    <scope>IDENTIFICATION</scope>
    <scope>TISSUE SPECIFICITY</scope>
</reference>
<comment type="function">
    <text>Could act as a modulator of transcription.</text>
</comment>
<comment type="tissue specificity">
    <text evidence="4">Not detected in any normal or tumor tissues.</text>
</comment>
<comment type="similarity">
    <text evidence="5">Belongs to the SSX family.</text>
</comment>
<comment type="caution">
    <text evidence="5">Could be the product of a pseudogene.</text>
</comment>
<comment type="sequence caution" evidence="5">
    <conflict type="erroneous gene model prediction">
        <sequence resource="EMBL-CDS" id="DAA00375"/>
    </conflict>
</comment>
<accession>Q7RTT4</accession>
<accession>A6NJM6</accession>
<sequence length="187" mass="21859">MNGDDAFAKRPRDDDKASEKRSKAFNDIATYFSKKEWEKMKYSEKISYVYMKRNYEAMTKLGFNVTLPPFMCNKQATDFQGNYFDNDRNRRIQVERPQMTFGRLQRIIPKIMPKKPAEEGNDSKGVSEASGPQNDGKQLAPGKANTSEKINKRSGPKRGRHAWTHRLRERNQLVIYEEIRDPEEDDE</sequence>
<dbReference type="EMBL" id="AL450023">
    <property type="status" value="NOT_ANNOTATED_CDS"/>
    <property type="molecule type" value="Genomic_DNA"/>
</dbReference>
<dbReference type="EMBL" id="BK000688">
    <property type="protein sequence ID" value="DAA00375.1"/>
    <property type="status" value="ALT_SEQ"/>
    <property type="molecule type" value="Genomic_DNA"/>
</dbReference>
<dbReference type="FunCoup" id="Q7RTT4">
    <property type="interactions" value="283"/>
</dbReference>
<dbReference type="BioMuta" id="HGNC:19654"/>
<dbReference type="DMDM" id="158518620"/>
<dbReference type="MassIVE" id="Q7RTT4"/>
<dbReference type="PeptideAtlas" id="Q7RTT4"/>
<dbReference type="AGR" id="HGNC:19654"/>
<dbReference type="GeneCards" id="SSX8P"/>
<dbReference type="HGNC" id="HGNC:19654">
    <property type="gene designation" value="SSX8P"/>
</dbReference>
<dbReference type="MIM" id="300543">
    <property type="type" value="gene"/>
</dbReference>
<dbReference type="neXtProt" id="NX_Q7RTT4"/>
<dbReference type="InParanoid" id="Q7RTT4"/>
<dbReference type="PAN-GO" id="Q7RTT4">
    <property type="GO annotations" value="1 GO annotation based on evolutionary models"/>
</dbReference>
<dbReference type="PhylomeDB" id="Q7RTT4"/>
<dbReference type="Pharos" id="Q7RTT4">
    <property type="development level" value="Tdark"/>
</dbReference>
<dbReference type="PRO" id="PR:Q7RTT4"/>
<dbReference type="Proteomes" id="UP000005640">
    <property type="component" value="Unplaced"/>
</dbReference>
<dbReference type="RNAct" id="Q7RTT4">
    <property type="molecule type" value="protein"/>
</dbReference>
<dbReference type="GO" id="GO:0005634">
    <property type="term" value="C:nucleus"/>
    <property type="evidence" value="ECO:0000318"/>
    <property type="project" value="GO_Central"/>
</dbReference>
<dbReference type="GO" id="GO:0006355">
    <property type="term" value="P:regulation of DNA-templated transcription"/>
    <property type="evidence" value="ECO:0007669"/>
    <property type="project" value="InterPro"/>
</dbReference>
<dbReference type="InterPro" id="IPR003655">
    <property type="entry name" value="aKRAB"/>
</dbReference>
<dbReference type="InterPro" id="IPR001909">
    <property type="entry name" value="KRAB"/>
</dbReference>
<dbReference type="InterPro" id="IPR036051">
    <property type="entry name" value="KRAB_dom_sf"/>
</dbReference>
<dbReference type="InterPro" id="IPR019041">
    <property type="entry name" value="SSXRD_motif"/>
</dbReference>
<dbReference type="PANTHER" id="PTHR14112:SF27">
    <property type="entry name" value="PROTEIN SSX6-RELATED"/>
    <property type="match status" value="1"/>
</dbReference>
<dbReference type="PANTHER" id="PTHR14112">
    <property type="entry name" value="SYNOVIAL SARCOMA, X MEMBER"/>
    <property type="match status" value="1"/>
</dbReference>
<dbReference type="Pfam" id="PF09514">
    <property type="entry name" value="SSXRD"/>
    <property type="match status" value="1"/>
</dbReference>
<dbReference type="SMART" id="SM00349">
    <property type="entry name" value="KRAB"/>
    <property type="match status" value="1"/>
</dbReference>
<dbReference type="SUPFAM" id="SSF109640">
    <property type="entry name" value="KRAB domain (Kruppel-associated box)"/>
    <property type="match status" value="1"/>
</dbReference>
<dbReference type="PROSITE" id="PS50806">
    <property type="entry name" value="KRAB_RELATED"/>
    <property type="match status" value="1"/>
</dbReference>